<evidence type="ECO:0000255" key="1">
    <source>
        <dbReference type="HAMAP-Rule" id="MF_01445"/>
    </source>
</evidence>
<feature type="chain" id="PRO_0000303313" description="tRNA N6-adenosine threonylcarbamoyltransferase">
    <location>
        <begin position="1"/>
        <end position="333"/>
    </location>
</feature>
<feature type="binding site" evidence="1">
    <location>
        <position position="111"/>
    </location>
    <ligand>
        <name>Fe cation</name>
        <dbReference type="ChEBI" id="CHEBI:24875"/>
    </ligand>
</feature>
<feature type="binding site" evidence="1">
    <location>
        <position position="115"/>
    </location>
    <ligand>
        <name>Fe cation</name>
        <dbReference type="ChEBI" id="CHEBI:24875"/>
    </ligand>
</feature>
<feature type="binding site" evidence="1">
    <location>
        <begin position="134"/>
        <end position="138"/>
    </location>
    <ligand>
        <name>substrate</name>
    </ligand>
</feature>
<feature type="binding site" evidence="1">
    <location>
        <position position="167"/>
    </location>
    <ligand>
        <name>substrate</name>
    </ligand>
</feature>
<feature type="binding site" evidence="1">
    <location>
        <position position="180"/>
    </location>
    <ligand>
        <name>substrate</name>
    </ligand>
</feature>
<feature type="binding site" evidence="1">
    <location>
        <position position="184"/>
    </location>
    <ligand>
        <name>substrate</name>
    </ligand>
</feature>
<feature type="binding site" evidence="1">
    <location>
        <position position="269"/>
    </location>
    <ligand>
        <name>substrate</name>
    </ligand>
</feature>
<feature type="binding site" evidence="1">
    <location>
        <position position="297"/>
    </location>
    <ligand>
        <name>Fe cation</name>
        <dbReference type="ChEBI" id="CHEBI:24875"/>
    </ligand>
</feature>
<reference key="1">
    <citation type="journal article" date="2005" name="PLoS Genet.">
        <title>Life in hot carbon monoxide: the complete genome sequence of Carboxydothermus hydrogenoformans Z-2901.</title>
        <authorList>
            <person name="Wu M."/>
            <person name="Ren Q."/>
            <person name="Durkin A.S."/>
            <person name="Daugherty S.C."/>
            <person name="Brinkac L.M."/>
            <person name="Dodson R.J."/>
            <person name="Madupu R."/>
            <person name="Sullivan S.A."/>
            <person name="Kolonay J.F."/>
            <person name="Nelson W.C."/>
            <person name="Tallon L.J."/>
            <person name="Jones K.M."/>
            <person name="Ulrich L.E."/>
            <person name="Gonzalez J.M."/>
            <person name="Zhulin I.B."/>
            <person name="Robb F.T."/>
            <person name="Eisen J.A."/>
        </authorList>
    </citation>
    <scope>NUCLEOTIDE SEQUENCE [LARGE SCALE GENOMIC DNA]</scope>
    <source>
        <strain>ATCC BAA-161 / DSM 6008 / Z-2901</strain>
    </source>
</reference>
<proteinExistence type="inferred from homology"/>
<comment type="function">
    <text evidence="1">Required for the formation of a threonylcarbamoyl group on adenosine at position 37 (t(6)A37) in tRNAs that read codons beginning with adenine. Is involved in the transfer of the threonylcarbamoyl moiety of threonylcarbamoyl-AMP (TC-AMP) to the N6 group of A37, together with TsaE and TsaB. TsaD likely plays a direct catalytic role in this reaction.</text>
</comment>
<comment type="catalytic activity">
    <reaction evidence="1">
        <text>L-threonylcarbamoyladenylate + adenosine(37) in tRNA = N(6)-L-threonylcarbamoyladenosine(37) in tRNA + AMP + H(+)</text>
        <dbReference type="Rhea" id="RHEA:37059"/>
        <dbReference type="Rhea" id="RHEA-COMP:10162"/>
        <dbReference type="Rhea" id="RHEA-COMP:10163"/>
        <dbReference type="ChEBI" id="CHEBI:15378"/>
        <dbReference type="ChEBI" id="CHEBI:73682"/>
        <dbReference type="ChEBI" id="CHEBI:74411"/>
        <dbReference type="ChEBI" id="CHEBI:74418"/>
        <dbReference type="ChEBI" id="CHEBI:456215"/>
        <dbReference type="EC" id="2.3.1.234"/>
    </reaction>
</comment>
<comment type="cofactor">
    <cofactor evidence="1">
        <name>Fe(2+)</name>
        <dbReference type="ChEBI" id="CHEBI:29033"/>
    </cofactor>
    <text evidence="1">Binds 1 Fe(2+) ion per subunit.</text>
</comment>
<comment type="subcellular location">
    <subcellularLocation>
        <location evidence="1">Cytoplasm</location>
    </subcellularLocation>
</comment>
<comment type="similarity">
    <text evidence="1">Belongs to the KAE1 / TsaD family.</text>
</comment>
<accession>Q3AE55</accession>
<sequence length="333" mass="36440">MGKVILGIETSCDETAVSLVEDGRKVLISLLSSQVDLHRLYGGVVPEIASRRHLELIFPLLDEAFRKFPREKIAAVAVTYGPGLVGALLVGLSVAKSLSYALNVPLIGVNHMEGHIFANFLEDANPVFPALVLVVSGGHTDLIFMRGFGDYELLGETIDDAAGECFDKVGRVLNLPYPAGPVIDRLSKKGKPIYKFPVARLKEEGYNFSFSGLKTAVRVFREKNPEAKVEDIAASFQEALVRALVENTEKALKECMPAKLYLAGGVAANSRLREEFLNLGKTYNVPVHFPSLQYCTDNAAMIAAAGYHRYLSGKYAPLNLNAYPSLMLGEERY</sequence>
<protein>
    <recommendedName>
        <fullName evidence="1">tRNA N6-adenosine threonylcarbamoyltransferase</fullName>
        <ecNumber evidence="1">2.3.1.234</ecNumber>
    </recommendedName>
    <alternativeName>
        <fullName evidence="1">N6-L-threonylcarbamoyladenine synthase</fullName>
        <shortName evidence="1">t(6)A synthase</shortName>
    </alternativeName>
    <alternativeName>
        <fullName evidence="1">t(6)A37 threonylcarbamoyladenosine biosynthesis protein TsaD</fullName>
    </alternativeName>
    <alternativeName>
        <fullName evidence="1">tRNA threonylcarbamoyladenosine biosynthesis protein TsaD</fullName>
    </alternativeName>
</protein>
<name>TSAD_CARHZ</name>
<keyword id="KW-0012">Acyltransferase</keyword>
<keyword id="KW-0963">Cytoplasm</keyword>
<keyword id="KW-0408">Iron</keyword>
<keyword id="KW-0479">Metal-binding</keyword>
<keyword id="KW-1185">Reference proteome</keyword>
<keyword id="KW-0808">Transferase</keyword>
<keyword id="KW-0819">tRNA processing</keyword>
<dbReference type="EC" id="2.3.1.234" evidence="1"/>
<dbReference type="EMBL" id="CP000141">
    <property type="protein sequence ID" value="ABB14796.1"/>
    <property type="molecule type" value="Genomic_DNA"/>
</dbReference>
<dbReference type="RefSeq" id="WP_011343655.1">
    <property type="nucleotide sequence ID" value="NC_007503.1"/>
</dbReference>
<dbReference type="SMR" id="Q3AE55"/>
<dbReference type="FunCoup" id="Q3AE55">
    <property type="interactions" value="492"/>
</dbReference>
<dbReference type="STRING" id="246194.CHY_0725"/>
<dbReference type="KEGG" id="chy:CHY_0725"/>
<dbReference type="eggNOG" id="COG0533">
    <property type="taxonomic scope" value="Bacteria"/>
</dbReference>
<dbReference type="HOGENOM" id="CLU_023208_0_2_9"/>
<dbReference type="InParanoid" id="Q3AE55"/>
<dbReference type="OrthoDB" id="9806197at2"/>
<dbReference type="Proteomes" id="UP000002706">
    <property type="component" value="Chromosome"/>
</dbReference>
<dbReference type="GO" id="GO:0005737">
    <property type="term" value="C:cytoplasm"/>
    <property type="evidence" value="ECO:0007669"/>
    <property type="project" value="UniProtKB-SubCell"/>
</dbReference>
<dbReference type="GO" id="GO:0005506">
    <property type="term" value="F:iron ion binding"/>
    <property type="evidence" value="ECO:0007669"/>
    <property type="project" value="UniProtKB-UniRule"/>
</dbReference>
<dbReference type="GO" id="GO:0061711">
    <property type="term" value="F:N(6)-L-threonylcarbamoyladenine synthase activity"/>
    <property type="evidence" value="ECO:0007669"/>
    <property type="project" value="UniProtKB-EC"/>
</dbReference>
<dbReference type="GO" id="GO:0002949">
    <property type="term" value="P:tRNA threonylcarbamoyladenosine modification"/>
    <property type="evidence" value="ECO:0007669"/>
    <property type="project" value="UniProtKB-UniRule"/>
</dbReference>
<dbReference type="CDD" id="cd24133">
    <property type="entry name" value="ASKHA_NBD_TsaD_bac"/>
    <property type="match status" value="1"/>
</dbReference>
<dbReference type="FunFam" id="3.30.420.40:FF:000012">
    <property type="entry name" value="tRNA N6-adenosine threonylcarbamoyltransferase"/>
    <property type="match status" value="1"/>
</dbReference>
<dbReference type="FunFam" id="3.30.420.40:FF:000040">
    <property type="entry name" value="tRNA N6-adenosine threonylcarbamoyltransferase"/>
    <property type="match status" value="1"/>
</dbReference>
<dbReference type="Gene3D" id="3.30.420.40">
    <property type="match status" value="2"/>
</dbReference>
<dbReference type="HAMAP" id="MF_01445">
    <property type="entry name" value="TsaD"/>
    <property type="match status" value="1"/>
</dbReference>
<dbReference type="InterPro" id="IPR043129">
    <property type="entry name" value="ATPase_NBD"/>
</dbReference>
<dbReference type="InterPro" id="IPR000905">
    <property type="entry name" value="Gcp-like_dom"/>
</dbReference>
<dbReference type="InterPro" id="IPR017861">
    <property type="entry name" value="KAE1/TsaD"/>
</dbReference>
<dbReference type="InterPro" id="IPR017860">
    <property type="entry name" value="Peptidase_M22_CS"/>
</dbReference>
<dbReference type="InterPro" id="IPR022450">
    <property type="entry name" value="TsaD"/>
</dbReference>
<dbReference type="NCBIfam" id="TIGR00329">
    <property type="entry name" value="gcp_kae1"/>
    <property type="match status" value="1"/>
</dbReference>
<dbReference type="NCBIfam" id="TIGR03723">
    <property type="entry name" value="T6A_TsaD_YgjD"/>
    <property type="match status" value="1"/>
</dbReference>
<dbReference type="PANTHER" id="PTHR11735">
    <property type="entry name" value="TRNA N6-ADENOSINE THREONYLCARBAMOYLTRANSFERASE"/>
    <property type="match status" value="1"/>
</dbReference>
<dbReference type="PANTHER" id="PTHR11735:SF6">
    <property type="entry name" value="TRNA N6-ADENOSINE THREONYLCARBAMOYLTRANSFERASE, MITOCHONDRIAL"/>
    <property type="match status" value="1"/>
</dbReference>
<dbReference type="Pfam" id="PF00814">
    <property type="entry name" value="TsaD"/>
    <property type="match status" value="1"/>
</dbReference>
<dbReference type="PRINTS" id="PR00789">
    <property type="entry name" value="OSIALOPTASE"/>
</dbReference>
<dbReference type="SUPFAM" id="SSF53067">
    <property type="entry name" value="Actin-like ATPase domain"/>
    <property type="match status" value="1"/>
</dbReference>
<dbReference type="PROSITE" id="PS01016">
    <property type="entry name" value="GLYCOPROTEASE"/>
    <property type="match status" value="1"/>
</dbReference>
<gene>
    <name evidence="1" type="primary">tsaD</name>
    <name type="synonym">gcp</name>
    <name type="ordered locus">CHY_0725</name>
</gene>
<organism>
    <name type="scientific">Carboxydothermus hydrogenoformans (strain ATCC BAA-161 / DSM 6008 / Z-2901)</name>
    <dbReference type="NCBI Taxonomy" id="246194"/>
    <lineage>
        <taxon>Bacteria</taxon>
        <taxon>Bacillati</taxon>
        <taxon>Bacillota</taxon>
        <taxon>Clostridia</taxon>
        <taxon>Thermoanaerobacterales</taxon>
        <taxon>Thermoanaerobacteraceae</taxon>
        <taxon>Carboxydothermus</taxon>
    </lineage>
</organism>